<comment type="function">
    <text evidence="1">The pyruvate dehydrogenase complex catalyzes the overall conversion of pyruvate to acetyl-CoA and CO(2). It contains multiple copies of three enzymatic components: pyruvate dehydrogenase (E1), dihydrolipoamide acetyltransferase (E2) and lipoamide dehydrogenase (E3) (By similarity).</text>
</comment>
<comment type="catalytic activity">
    <reaction>
        <text>N(6)-[(R)-lipoyl]-L-lysyl-[protein] + pyruvate + H(+) = N(6)-[(R)-S(8)-acetyldihydrolipoyl]-L-lysyl-[protein] + CO2</text>
        <dbReference type="Rhea" id="RHEA:19189"/>
        <dbReference type="Rhea" id="RHEA-COMP:10474"/>
        <dbReference type="Rhea" id="RHEA-COMP:10478"/>
        <dbReference type="ChEBI" id="CHEBI:15361"/>
        <dbReference type="ChEBI" id="CHEBI:15378"/>
        <dbReference type="ChEBI" id="CHEBI:16526"/>
        <dbReference type="ChEBI" id="CHEBI:83099"/>
        <dbReference type="ChEBI" id="CHEBI:83111"/>
        <dbReference type="EC" id="1.2.4.1"/>
    </reaction>
</comment>
<comment type="cofactor">
    <cofactor evidence="1">
        <name>thiamine diphosphate</name>
        <dbReference type="ChEBI" id="CHEBI:58937"/>
    </cofactor>
</comment>
<comment type="subunit">
    <text evidence="1">Heterodimer of an alpha and a beta chain.</text>
</comment>
<feature type="chain" id="PRO_0000232457" description="Pyruvate dehydrogenase E1 component subunit beta">
    <location>
        <begin position="1"/>
        <end position="337"/>
    </location>
</feature>
<feature type="binding site" evidence="1">
    <location>
        <position position="73"/>
    </location>
    <ligand>
        <name>thiamine diphosphate</name>
        <dbReference type="ChEBI" id="CHEBI:58937"/>
    </ligand>
</feature>
<reference key="1">
    <citation type="journal article" date="2004" name="Mol. Plant Microbe Interact.">
        <title>The genome sequence of the Gram-positive sugarcane pathogen Leifsonia xyli subsp. xyli.</title>
        <authorList>
            <person name="Monteiro-Vitorello C.B."/>
            <person name="Camargo L.E.A."/>
            <person name="Van Sluys M.A."/>
            <person name="Kitajima J.P."/>
            <person name="Truffi D."/>
            <person name="do Amaral A.M."/>
            <person name="Harakava R."/>
            <person name="de Oliveira J.C.F."/>
            <person name="Wood D."/>
            <person name="de Oliveira M.C."/>
            <person name="Miyaki C.Y."/>
            <person name="Takita M.A."/>
            <person name="da Silva A.C.R."/>
            <person name="Furlan L.R."/>
            <person name="Carraro D.M."/>
            <person name="Camarotte G."/>
            <person name="Almeida N.F. Jr."/>
            <person name="Carrer H."/>
            <person name="Coutinho L.L."/>
            <person name="El-Dorry H.A."/>
            <person name="Ferro M.I.T."/>
            <person name="Gagliardi P.R."/>
            <person name="Giglioti E."/>
            <person name="Goldman M.H.S."/>
            <person name="Goldman G.H."/>
            <person name="Kimura E.T."/>
            <person name="Ferro E.S."/>
            <person name="Kuramae E.E."/>
            <person name="Lemos E.G.M."/>
            <person name="Lemos M.V.F."/>
            <person name="Mauro S.M.Z."/>
            <person name="Machado M.A."/>
            <person name="Marino C.L."/>
            <person name="Menck C.F."/>
            <person name="Nunes L.R."/>
            <person name="Oliveira R.C."/>
            <person name="Pereira G.G."/>
            <person name="Siqueira W."/>
            <person name="de Souza A.A."/>
            <person name="Tsai S.M."/>
            <person name="Zanca A.S."/>
            <person name="Simpson A.J.G."/>
            <person name="Brumbley S.M."/>
            <person name="Setubal J.C."/>
        </authorList>
    </citation>
    <scope>NUCLEOTIDE SEQUENCE [LARGE SCALE GENOMIC DNA]</scope>
    <source>
        <strain>CTCB07</strain>
    </source>
</reference>
<dbReference type="EC" id="1.2.4.1"/>
<dbReference type="EMBL" id="AE016822">
    <property type="protein sequence ID" value="AAT90114.1"/>
    <property type="molecule type" value="Genomic_DNA"/>
</dbReference>
<dbReference type="SMR" id="Q6ABX8"/>
<dbReference type="STRING" id="281090.Lxx25060"/>
<dbReference type="KEGG" id="lxx:Lxx25060"/>
<dbReference type="eggNOG" id="COG0022">
    <property type="taxonomic scope" value="Bacteria"/>
</dbReference>
<dbReference type="HOGENOM" id="CLU_012907_1_0_11"/>
<dbReference type="Proteomes" id="UP000001306">
    <property type="component" value="Chromosome"/>
</dbReference>
<dbReference type="GO" id="GO:0000287">
    <property type="term" value="F:magnesium ion binding"/>
    <property type="evidence" value="ECO:0007669"/>
    <property type="project" value="UniProtKB-ARBA"/>
</dbReference>
<dbReference type="GO" id="GO:0004739">
    <property type="term" value="F:pyruvate dehydrogenase (acetyl-transferring) activity"/>
    <property type="evidence" value="ECO:0007669"/>
    <property type="project" value="UniProtKB-EC"/>
</dbReference>
<dbReference type="CDD" id="cd07036">
    <property type="entry name" value="TPP_PYR_E1-PDHc-beta_like"/>
    <property type="match status" value="1"/>
</dbReference>
<dbReference type="FunFam" id="3.40.50.920:FF:000001">
    <property type="entry name" value="Pyruvate dehydrogenase E1 beta subunit"/>
    <property type="match status" value="1"/>
</dbReference>
<dbReference type="FunFam" id="3.40.50.970:FF:000001">
    <property type="entry name" value="Pyruvate dehydrogenase E1 beta subunit"/>
    <property type="match status" value="1"/>
</dbReference>
<dbReference type="Gene3D" id="3.40.50.920">
    <property type="match status" value="1"/>
</dbReference>
<dbReference type="Gene3D" id="3.40.50.970">
    <property type="match status" value="1"/>
</dbReference>
<dbReference type="InterPro" id="IPR029061">
    <property type="entry name" value="THDP-binding"/>
</dbReference>
<dbReference type="InterPro" id="IPR009014">
    <property type="entry name" value="Transketo_C/PFOR_II"/>
</dbReference>
<dbReference type="InterPro" id="IPR005475">
    <property type="entry name" value="Transketolase-like_Pyr-bd"/>
</dbReference>
<dbReference type="InterPro" id="IPR033248">
    <property type="entry name" value="Transketolase_C"/>
</dbReference>
<dbReference type="PANTHER" id="PTHR43257">
    <property type="entry name" value="PYRUVATE DEHYDROGENASE E1 COMPONENT BETA SUBUNIT"/>
    <property type="match status" value="1"/>
</dbReference>
<dbReference type="PANTHER" id="PTHR43257:SF2">
    <property type="entry name" value="PYRUVATE DEHYDROGENASE E1 COMPONENT SUBUNIT BETA"/>
    <property type="match status" value="1"/>
</dbReference>
<dbReference type="Pfam" id="PF02779">
    <property type="entry name" value="Transket_pyr"/>
    <property type="match status" value="1"/>
</dbReference>
<dbReference type="Pfam" id="PF02780">
    <property type="entry name" value="Transketolase_C"/>
    <property type="match status" value="1"/>
</dbReference>
<dbReference type="SMART" id="SM00861">
    <property type="entry name" value="Transket_pyr"/>
    <property type="match status" value="1"/>
</dbReference>
<dbReference type="SUPFAM" id="SSF52518">
    <property type="entry name" value="Thiamin diphosphate-binding fold (THDP-binding)"/>
    <property type="match status" value="1"/>
</dbReference>
<dbReference type="SUPFAM" id="SSF52922">
    <property type="entry name" value="TK C-terminal domain-like"/>
    <property type="match status" value="1"/>
</dbReference>
<organism>
    <name type="scientific">Leifsonia xyli subsp. xyli (strain CTCB07)</name>
    <dbReference type="NCBI Taxonomy" id="281090"/>
    <lineage>
        <taxon>Bacteria</taxon>
        <taxon>Bacillati</taxon>
        <taxon>Actinomycetota</taxon>
        <taxon>Actinomycetes</taxon>
        <taxon>Micrococcales</taxon>
        <taxon>Microbacteriaceae</taxon>
        <taxon>Leifsonia</taxon>
    </lineage>
</organism>
<proteinExistence type="inferred from homology"/>
<accession>Q6ABX8</accession>
<evidence type="ECO:0000250" key="1"/>
<keyword id="KW-0560">Oxidoreductase</keyword>
<keyword id="KW-0670">Pyruvate</keyword>
<keyword id="KW-1185">Reference proteome</keyword>
<keyword id="KW-0786">Thiamine pyrophosphate</keyword>
<sequence length="337" mass="36087">MERAPALAEPEPRVQSLPMVKALNAGLRQALVADPKVLILGEDVGPLGGVFRVTEGLQSEFGASRVVDTPLAEAGIVGTAIGLAMRGYRPVVEIQFNGFVFPGFDQITTQLAKMANRHSGAVSMPVVIRIPHGGHIGAVEHHQEAPEAYFAHTAGLRIVAPSTPHDAYWMIQEAIASDDPVIFFEPMSRYWPKGEVDTLENPLPLHASRIVRSGTDATIVAWAGMVPVALRAAEIAAEEGRSLEVVDLRSLAPIDYAPVLRSVQKTGRLVVAQEAPGIVSVGSEVAAVVGEKAFYSLEAPVLRVAGFDTPFPPAKLESLYLPDADRILEVVDRSLAY</sequence>
<name>ODPB_LEIXX</name>
<protein>
    <recommendedName>
        <fullName>Pyruvate dehydrogenase E1 component subunit beta</fullName>
        <ecNumber>1.2.4.1</ecNumber>
    </recommendedName>
</protein>
<gene>
    <name type="primary">pdhB</name>
    <name type="ordered locus">Lxx25060</name>
</gene>